<keyword id="KW-0489">Methyltransferase</keyword>
<keyword id="KW-1185">Reference proteome</keyword>
<keyword id="KW-0949">S-adenosyl-L-methionine</keyword>
<keyword id="KW-0802">TPR repeat</keyword>
<keyword id="KW-0808">Transferase</keyword>
<protein>
    <recommendedName>
        <fullName>Probable biofilm formation methyltransferase WspC</fullName>
        <ecNumber>2.1.1.-</ecNumber>
    </recommendedName>
</protein>
<dbReference type="EC" id="2.1.1.-"/>
<dbReference type="EMBL" id="AE015451">
    <property type="protein sequence ID" value="AAN67112.1"/>
    <property type="molecule type" value="Genomic_DNA"/>
</dbReference>
<dbReference type="RefSeq" id="NP_743648.1">
    <property type="nucleotide sequence ID" value="NC_002947.4"/>
</dbReference>
<dbReference type="RefSeq" id="WP_010952583.1">
    <property type="nucleotide sequence ID" value="NZ_CP169744.1"/>
</dbReference>
<dbReference type="SMR" id="Q88MS8"/>
<dbReference type="STRING" id="160488.PP_1490"/>
<dbReference type="PaxDb" id="160488-PP_1490"/>
<dbReference type="KEGG" id="ppu:PP_1490"/>
<dbReference type="PATRIC" id="fig|160488.4.peg.1580"/>
<dbReference type="eggNOG" id="COG0457">
    <property type="taxonomic scope" value="Bacteria"/>
</dbReference>
<dbReference type="eggNOG" id="COG1352">
    <property type="taxonomic scope" value="Bacteria"/>
</dbReference>
<dbReference type="HOGENOM" id="CLU_025854_4_0_6"/>
<dbReference type="OrthoDB" id="9816309at2"/>
<dbReference type="PhylomeDB" id="Q88MS8"/>
<dbReference type="BioCyc" id="PPUT160488:G1G01-1581-MONOMER"/>
<dbReference type="BRENDA" id="2.1.1.80">
    <property type="organism ID" value="5092"/>
</dbReference>
<dbReference type="Proteomes" id="UP000000556">
    <property type="component" value="Chromosome"/>
</dbReference>
<dbReference type="GO" id="GO:0008757">
    <property type="term" value="F:S-adenosylmethionine-dependent methyltransferase activity"/>
    <property type="evidence" value="ECO:0007669"/>
    <property type="project" value="InterPro"/>
</dbReference>
<dbReference type="GO" id="GO:0032259">
    <property type="term" value="P:methylation"/>
    <property type="evidence" value="ECO:0007669"/>
    <property type="project" value="UniProtKB-KW"/>
</dbReference>
<dbReference type="CDD" id="cd02440">
    <property type="entry name" value="AdoMet_MTases"/>
    <property type="match status" value="1"/>
</dbReference>
<dbReference type="Gene3D" id="1.25.40.10">
    <property type="entry name" value="Tetratricopeptide repeat domain"/>
    <property type="match status" value="1"/>
</dbReference>
<dbReference type="Gene3D" id="3.40.50.150">
    <property type="entry name" value="Vaccinia Virus protein VP39"/>
    <property type="match status" value="1"/>
</dbReference>
<dbReference type="InterPro" id="IPR050903">
    <property type="entry name" value="Bact_Chemotaxis_MeTrfase"/>
</dbReference>
<dbReference type="InterPro" id="IPR022642">
    <property type="entry name" value="CheR_C"/>
</dbReference>
<dbReference type="InterPro" id="IPR000780">
    <property type="entry name" value="CheR_MeTrfase"/>
</dbReference>
<dbReference type="InterPro" id="IPR022641">
    <property type="entry name" value="CheR_N"/>
</dbReference>
<dbReference type="InterPro" id="IPR029063">
    <property type="entry name" value="SAM-dependent_MTases_sf"/>
</dbReference>
<dbReference type="InterPro" id="IPR011990">
    <property type="entry name" value="TPR-like_helical_dom_sf"/>
</dbReference>
<dbReference type="InterPro" id="IPR019734">
    <property type="entry name" value="TPR_rpt"/>
</dbReference>
<dbReference type="PANTHER" id="PTHR24422">
    <property type="entry name" value="CHEMOTAXIS PROTEIN METHYLTRANSFERASE"/>
    <property type="match status" value="1"/>
</dbReference>
<dbReference type="PANTHER" id="PTHR24422:SF19">
    <property type="entry name" value="CHEMOTAXIS PROTEIN METHYLTRANSFERASE"/>
    <property type="match status" value="1"/>
</dbReference>
<dbReference type="Pfam" id="PF01739">
    <property type="entry name" value="CheR"/>
    <property type="match status" value="1"/>
</dbReference>
<dbReference type="Pfam" id="PF03705">
    <property type="entry name" value="CheR_N"/>
    <property type="match status" value="1"/>
</dbReference>
<dbReference type="Pfam" id="PF14559">
    <property type="entry name" value="TPR_19"/>
    <property type="match status" value="1"/>
</dbReference>
<dbReference type="PRINTS" id="PR00996">
    <property type="entry name" value="CHERMTFRASE"/>
</dbReference>
<dbReference type="SMART" id="SM00138">
    <property type="entry name" value="MeTrc"/>
    <property type="match status" value="1"/>
</dbReference>
<dbReference type="SMART" id="SM00028">
    <property type="entry name" value="TPR"/>
    <property type="match status" value="2"/>
</dbReference>
<dbReference type="SUPFAM" id="SSF47757">
    <property type="entry name" value="Chemotaxis receptor methyltransferase CheR, N-terminal domain"/>
    <property type="match status" value="1"/>
</dbReference>
<dbReference type="SUPFAM" id="SSF53335">
    <property type="entry name" value="S-adenosyl-L-methionine-dependent methyltransferases"/>
    <property type="match status" value="1"/>
</dbReference>
<dbReference type="SUPFAM" id="SSF48452">
    <property type="entry name" value="TPR-like"/>
    <property type="match status" value="1"/>
</dbReference>
<dbReference type="PROSITE" id="PS50123">
    <property type="entry name" value="CHER"/>
    <property type="match status" value="1"/>
</dbReference>
<dbReference type="PROSITE" id="PS50005">
    <property type="entry name" value="TPR"/>
    <property type="match status" value="1"/>
</dbReference>
<dbReference type="PROSITE" id="PS50293">
    <property type="entry name" value="TPR_REGION"/>
    <property type="match status" value="1"/>
</dbReference>
<organism>
    <name type="scientific">Pseudomonas putida (strain ATCC 47054 / DSM 6125 / CFBP 8728 / NCIMB 11950 / KT2440)</name>
    <dbReference type="NCBI Taxonomy" id="160488"/>
    <lineage>
        <taxon>Bacteria</taxon>
        <taxon>Pseudomonadati</taxon>
        <taxon>Pseudomonadota</taxon>
        <taxon>Gammaproteobacteria</taxon>
        <taxon>Pseudomonadales</taxon>
        <taxon>Pseudomonadaceae</taxon>
        <taxon>Pseudomonas</taxon>
    </lineage>
</organism>
<evidence type="ECO:0000250" key="1"/>
<evidence type="ECO:0000255" key="2">
    <source>
        <dbReference type="PROSITE-ProRule" id="PRU00051"/>
    </source>
</evidence>
<evidence type="ECO:0000269" key="3">
    <source>
    </source>
</evidence>
<evidence type="ECO:0000269" key="4">
    <source>
    </source>
</evidence>
<gene>
    <name type="primary">wspC</name>
    <name type="synonym">cheR1</name>
    <name type="ordered locus">PP_1490</name>
</gene>
<feature type="chain" id="PRO_0000424792" description="Probable biofilm formation methyltransferase WspC">
    <location>
        <begin position="1"/>
        <end position="424"/>
    </location>
</feature>
<feature type="domain" description="CheR-type methyltransferase" evidence="2">
    <location>
        <begin position="1"/>
        <end position="263"/>
    </location>
</feature>
<feature type="repeat" description="TPR">
    <location>
        <begin position="355"/>
        <end position="388"/>
    </location>
</feature>
<feature type="binding site" evidence="1">
    <location>
        <position position="68"/>
    </location>
    <ligand>
        <name>S-adenosyl-L-methionine</name>
        <dbReference type="ChEBI" id="CHEBI:59789"/>
    </ligand>
</feature>
<feature type="binding site" evidence="1">
    <location>
        <position position="72"/>
    </location>
    <ligand>
        <name>S-adenosyl-L-methionine</name>
        <dbReference type="ChEBI" id="CHEBI:59789"/>
    </ligand>
</feature>
<feature type="binding site" evidence="1">
    <location>
        <position position="109"/>
    </location>
    <ligand>
        <name>S-adenosyl-L-methionine</name>
        <dbReference type="ChEBI" id="CHEBI:59789"/>
    </ligand>
</feature>
<feature type="binding site" evidence="1">
    <location>
        <position position="133"/>
    </location>
    <ligand>
        <name>S-adenosyl-L-methionine</name>
        <dbReference type="ChEBI" id="CHEBI:59789"/>
    </ligand>
</feature>
<feature type="binding site" evidence="1">
    <location>
        <begin position="187"/>
        <end position="188"/>
    </location>
    <ligand>
        <name>S-adenosyl-L-methionine</name>
        <dbReference type="ChEBI" id="CHEBI:59789"/>
    </ligand>
</feature>
<feature type="binding site" evidence="1">
    <location>
        <begin position="206"/>
        <end position="207"/>
    </location>
    <ligand>
        <name>S-adenosyl-L-methionine</name>
        <dbReference type="ChEBI" id="CHEBI:59789"/>
    </ligand>
</feature>
<name>WSPC_PSEPK</name>
<proteinExistence type="evidence at protein level"/>
<sequence>MNEQRFFRFLRERIGLDVESVGAPMVERALRQRCVAAGAMDLDDYWLRLQQSADEQQALIEAVIVPETWFFRYPESFTALASLAHKRLAQLAGARPLRLLSLPCSTGEEPYSLAMALFDAGMAPGAFLVDGMDISPSSVAKAGQAVYGRNAFRGSELGFRERYFDALDEGHRLHERVRQQVSLRVGNVLDPALASRDGLYDFVFCRNLLIYFDVPTQQRVFEVLKRLLHPQGVLFIGPAEGSLLARMGMRPLGIAQSFAYVRHEGDSAPLAAAPAQTAKRAFTTLPAPVYPQPSVPLPRSRRVLPVAARPARAREHSHEGASELLAGIARLANAGASEQARSECQRYLSQYPPSAQVYYWLGLLSDTEGDAQQALSHYRKALYLEPQHPEALVHLAALLAAQGDLAGARRLQERAARAGRESER</sequence>
<comment type="function">
    <text evidence="4">Involved in biofilm formation.</text>
</comment>
<comment type="subunit">
    <text evidence="3">Monomer. The TPR repeat does not mediate self-association.</text>
</comment>
<comment type="disruption phenotype">
    <text evidence="4">Mutants show a dramatic reduction in biofilm formation.</text>
</comment>
<reference key="1">
    <citation type="journal article" date="2002" name="Environ. Microbiol.">
        <title>Complete genome sequence and comparative analysis of the metabolically versatile Pseudomonas putida KT2440.</title>
        <authorList>
            <person name="Nelson K.E."/>
            <person name="Weinel C."/>
            <person name="Paulsen I.T."/>
            <person name="Dodson R.J."/>
            <person name="Hilbert H."/>
            <person name="Martins dos Santos V.A.P."/>
            <person name="Fouts D.E."/>
            <person name="Gill S.R."/>
            <person name="Pop M."/>
            <person name="Holmes M."/>
            <person name="Brinkac L.M."/>
            <person name="Beanan M.J."/>
            <person name="DeBoy R.T."/>
            <person name="Daugherty S.C."/>
            <person name="Kolonay J.F."/>
            <person name="Madupu R."/>
            <person name="Nelson W.C."/>
            <person name="White O."/>
            <person name="Peterson J.D."/>
            <person name="Khouri H.M."/>
            <person name="Hance I."/>
            <person name="Chris Lee P."/>
            <person name="Holtzapple E.K."/>
            <person name="Scanlan D."/>
            <person name="Tran K."/>
            <person name="Moazzez A."/>
            <person name="Utterback T.R."/>
            <person name="Rizzo M."/>
            <person name="Lee K."/>
            <person name="Kosack D."/>
            <person name="Moestl D."/>
            <person name="Wedler H."/>
            <person name="Lauber J."/>
            <person name="Stjepandic D."/>
            <person name="Hoheisel J."/>
            <person name="Straetz M."/>
            <person name="Heim S."/>
            <person name="Kiewitz C."/>
            <person name="Eisen J.A."/>
            <person name="Timmis K.N."/>
            <person name="Duesterhoeft A."/>
            <person name="Tuemmler B."/>
            <person name="Fraser C.M."/>
        </authorList>
    </citation>
    <scope>NUCLEOTIDE SEQUENCE [LARGE SCALE GENOMIC DNA]</scope>
    <source>
        <strain>ATCC 47054 / DSM 6125 / CFBP 8728 / NCIMB 11950 / KT2440</strain>
    </source>
</reference>
<reference key="2">
    <citation type="journal article" date="2012" name="PLoS ONE">
        <title>Genes encoding Cher-TPR fusion proteins are predominantly found in gene clusters encoding chemosensory pathways with alternative cellular functions.</title>
        <authorList>
            <person name="Munoz-Martinez F."/>
            <person name="Garcia-Fontana C."/>
            <person name="Rico-Jimenez M."/>
            <person name="Alfonso C."/>
            <person name="Krell T."/>
        </authorList>
    </citation>
    <scope>SUBUNIT</scope>
    <scope>BINDING TO S-ADENOSYL-L-METHIONINE</scope>
    <scope>GENE NAME</scope>
    <source>
        <strain>ATCC 47054 / DSM 6125 / CFBP 8728 / NCIMB 11950 / KT2440</strain>
    </source>
</reference>
<reference key="3">
    <citation type="journal article" date="2013" name="J. Biol. Chem.">
        <title>High specificity in CheR methyltransferase function: CheR2 of Pseudomonas putida is essential for chemotaxis, whereas CheR1 is involved in biofilm formation.</title>
        <authorList>
            <person name="Garcia-Fontana C."/>
            <person name="Reyes-Darias J.A."/>
            <person name="Munoz-Martinez F."/>
            <person name="Alfonso C."/>
            <person name="Morel B."/>
            <person name="Ramos J.L."/>
            <person name="Krell T."/>
        </authorList>
    </citation>
    <scope>FUNCTION</scope>
    <scope>DISRUPTION PHENOTYPE</scope>
    <source>
        <strain>ATCC 47054 / DSM 6125 / CFBP 8728 / NCIMB 11950 / KT2440</strain>
    </source>
</reference>
<accession>Q88MS8</accession>